<protein>
    <recommendedName>
        <fullName evidence="1">Aspartyl/glutamyl-tRNA(Asn/Gln) amidotransferase subunit B</fullName>
        <shortName evidence="1">Asp/Glu-ADT subunit B</shortName>
        <ecNumber evidence="1">6.3.5.-</ecNumber>
    </recommendedName>
</protein>
<comment type="function">
    <text evidence="1">Allows the formation of correctly charged Asn-tRNA(Asn) or Gln-tRNA(Gln) through the transamidation of misacylated Asp-tRNA(Asn) or Glu-tRNA(Gln) in organisms which lack either or both of asparaginyl-tRNA or glutaminyl-tRNA synthetases. The reaction takes place in the presence of glutamine and ATP through an activated phospho-Asp-tRNA(Asn) or phospho-Glu-tRNA(Gln).</text>
</comment>
<comment type="catalytic activity">
    <reaction evidence="1">
        <text>L-glutamyl-tRNA(Gln) + L-glutamine + ATP + H2O = L-glutaminyl-tRNA(Gln) + L-glutamate + ADP + phosphate + H(+)</text>
        <dbReference type="Rhea" id="RHEA:17521"/>
        <dbReference type="Rhea" id="RHEA-COMP:9681"/>
        <dbReference type="Rhea" id="RHEA-COMP:9684"/>
        <dbReference type="ChEBI" id="CHEBI:15377"/>
        <dbReference type="ChEBI" id="CHEBI:15378"/>
        <dbReference type="ChEBI" id="CHEBI:29985"/>
        <dbReference type="ChEBI" id="CHEBI:30616"/>
        <dbReference type="ChEBI" id="CHEBI:43474"/>
        <dbReference type="ChEBI" id="CHEBI:58359"/>
        <dbReference type="ChEBI" id="CHEBI:78520"/>
        <dbReference type="ChEBI" id="CHEBI:78521"/>
        <dbReference type="ChEBI" id="CHEBI:456216"/>
    </reaction>
</comment>
<comment type="catalytic activity">
    <reaction evidence="1">
        <text>L-aspartyl-tRNA(Asn) + L-glutamine + ATP + H2O = L-asparaginyl-tRNA(Asn) + L-glutamate + ADP + phosphate + 2 H(+)</text>
        <dbReference type="Rhea" id="RHEA:14513"/>
        <dbReference type="Rhea" id="RHEA-COMP:9674"/>
        <dbReference type="Rhea" id="RHEA-COMP:9677"/>
        <dbReference type="ChEBI" id="CHEBI:15377"/>
        <dbReference type="ChEBI" id="CHEBI:15378"/>
        <dbReference type="ChEBI" id="CHEBI:29985"/>
        <dbReference type="ChEBI" id="CHEBI:30616"/>
        <dbReference type="ChEBI" id="CHEBI:43474"/>
        <dbReference type="ChEBI" id="CHEBI:58359"/>
        <dbReference type="ChEBI" id="CHEBI:78515"/>
        <dbReference type="ChEBI" id="CHEBI:78516"/>
        <dbReference type="ChEBI" id="CHEBI:456216"/>
    </reaction>
</comment>
<comment type="subunit">
    <text evidence="1">Heterotrimer of A, B and C subunits.</text>
</comment>
<comment type="similarity">
    <text evidence="1">Belongs to the GatB/GatE family. GatB subfamily.</text>
</comment>
<name>GATB_ACIAD</name>
<organism>
    <name type="scientific">Acinetobacter baylyi (strain ATCC 33305 / BD413 / ADP1)</name>
    <dbReference type="NCBI Taxonomy" id="62977"/>
    <lineage>
        <taxon>Bacteria</taxon>
        <taxon>Pseudomonadati</taxon>
        <taxon>Pseudomonadota</taxon>
        <taxon>Gammaproteobacteria</taxon>
        <taxon>Moraxellales</taxon>
        <taxon>Moraxellaceae</taxon>
        <taxon>Acinetobacter</taxon>
    </lineage>
</organism>
<feature type="chain" id="PRO_0000241185" description="Aspartyl/glutamyl-tRNA(Asn/Gln) amidotransferase subunit B">
    <location>
        <begin position="1"/>
        <end position="495"/>
    </location>
</feature>
<evidence type="ECO:0000255" key="1">
    <source>
        <dbReference type="HAMAP-Rule" id="MF_00121"/>
    </source>
</evidence>
<sequence>MNNPSKAAQKKPKSNLIDGWEVVIGIEIHTQLATQSKIFSGSSTEFGQDPNTQASLVDLAMPGVLPVLNEEVVNLAIRFGLGIDAYIDQASVFARKNYFYPDSPKGYQISQMDNPIVGLGHIDIQLEDGTVKRIGVTRAHLEEDAGKSIHDQFEGQSGIDLNRAGTPLLEIVSEPDMRSVEEAVAYIKSIHTLVRWLGISDGNMAEGSFRADCNVSLRRPGDAFGTRCELKNLNSFRFIEQAINVEIERQMEILEWGGTIDQETRLFDPNKMETRSMRSKEEANDYRYFPDPDLLPVIIADEQIKAIKATMPELPAARRERFIAEFAITEYDAHVLTLSREMADFYEAVVAAAGGAAHGKIAANWVMGEFSGALNKAGLELADSPVSAEQLGGMIARIVDNTISGKIAKQVFGFMWDEGKSADTIIQEKSLKQETDTGAIEAIIKDVLAANEKMVEEYKSGKEKAFNGLVGQVMKASKGKANPAQVNELMKKLIG</sequence>
<gene>
    <name evidence="1" type="primary">gatB</name>
    <name type="ordered locus">ACIAD0822</name>
</gene>
<reference key="1">
    <citation type="journal article" date="2004" name="Nucleic Acids Res.">
        <title>Unique features revealed by the genome sequence of Acinetobacter sp. ADP1, a versatile and naturally transformation competent bacterium.</title>
        <authorList>
            <person name="Barbe V."/>
            <person name="Vallenet D."/>
            <person name="Fonknechten N."/>
            <person name="Kreimeyer A."/>
            <person name="Oztas S."/>
            <person name="Labarre L."/>
            <person name="Cruveiller S."/>
            <person name="Robert C."/>
            <person name="Duprat S."/>
            <person name="Wincker P."/>
            <person name="Ornston L.N."/>
            <person name="Weissenbach J."/>
            <person name="Marliere P."/>
            <person name="Cohen G.N."/>
            <person name="Medigue C."/>
        </authorList>
    </citation>
    <scope>NUCLEOTIDE SEQUENCE [LARGE SCALE GENOMIC DNA]</scope>
    <source>
        <strain>ATCC 33305 / BD413 / ADP1</strain>
    </source>
</reference>
<accession>Q6FDY4</accession>
<dbReference type="EC" id="6.3.5.-" evidence="1"/>
<dbReference type="EMBL" id="CR543861">
    <property type="protein sequence ID" value="CAG67724.1"/>
    <property type="molecule type" value="Genomic_DNA"/>
</dbReference>
<dbReference type="RefSeq" id="WP_004922274.1">
    <property type="nucleotide sequence ID" value="NC_005966.1"/>
</dbReference>
<dbReference type="SMR" id="Q6FDY4"/>
<dbReference type="STRING" id="202950.GCA_001485005_02577"/>
<dbReference type="GeneID" id="45233289"/>
<dbReference type="KEGG" id="aci:ACIAD0822"/>
<dbReference type="eggNOG" id="COG0064">
    <property type="taxonomic scope" value="Bacteria"/>
</dbReference>
<dbReference type="HOGENOM" id="CLU_019240_1_1_6"/>
<dbReference type="OrthoDB" id="9804078at2"/>
<dbReference type="BioCyc" id="ASP62977:ACIAD_RS03805-MONOMER"/>
<dbReference type="Proteomes" id="UP000000430">
    <property type="component" value="Chromosome"/>
</dbReference>
<dbReference type="GO" id="GO:0050566">
    <property type="term" value="F:asparaginyl-tRNA synthase (glutamine-hydrolyzing) activity"/>
    <property type="evidence" value="ECO:0007669"/>
    <property type="project" value="RHEA"/>
</dbReference>
<dbReference type="GO" id="GO:0005524">
    <property type="term" value="F:ATP binding"/>
    <property type="evidence" value="ECO:0007669"/>
    <property type="project" value="UniProtKB-KW"/>
</dbReference>
<dbReference type="GO" id="GO:0050567">
    <property type="term" value="F:glutaminyl-tRNA synthase (glutamine-hydrolyzing) activity"/>
    <property type="evidence" value="ECO:0007669"/>
    <property type="project" value="UniProtKB-UniRule"/>
</dbReference>
<dbReference type="GO" id="GO:0070681">
    <property type="term" value="P:glutaminyl-tRNAGln biosynthesis via transamidation"/>
    <property type="evidence" value="ECO:0007669"/>
    <property type="project" value="TreeGrafter"/>
</dbReference>
<dbReference type="GO" id="GO:0006412">
    <property type="term" value="P:translation"/>
    <property type="evidence" value="ECO:0007669"/>
    <property type="project" value="UniProtKB-UniRule"/>
</dbReference>
<dbReference type="FunFam" id="1.10.10.410:FF:000001">
    <property type="entry name" value="Aspartyl/glutamyl-tRNA(Asn/Gln) amidotransferase subunit B"/>
    <property type="match status" value="1"/>
</dbReference>
<dbReference type="FunFam" id="1.10.150.380:FF:000001">
    <property type="entry name" value="Aspartyl/glutamyl-tRNA(Asn/Gln) amidotransferase subunit B"/>
    <property type="match status" value="1"/>
</dbReference>
<dbReference type="Gene3D" id="1.10.10.410">
    <property type="match status" value="1"/>
</dbReference>
<dbReference type="Gene3D" id="1.10.150.380">
    <property type="entry name" value="GatB domain, N-terminal subdomain"/>
    <property type="match status" value="1"/>
</dbReference>
<dbReference type="HAMAP" id="MF_00121">
    <property type="entry name" value="GatB"/>
    <property type="match status" value="1"/>
</dbReference>
<dbReference type="InterPro" id="IPR017959">
    <property type="entry name" value="Asn/Gln-tRNA_amidoTrfase_suB/E"/>
</dbReference>
<dbReference type="InterPro" id="IPR006075">
    <property type="entry name" value="Asn/Gln-tRNA_Trfase_suB/E_cat"/>
</dbReference>
<dbReference type="InterPro" id="IPR018027">
    <property type="entry name" value="Asn/Gln_amidotransferase"/>
</dbReference>
<dbReference type="InterPro" id="IPR003789">
    <property type="entry name" value="Asn/Gln_tRNA_amidoTrase-B-like"/>
</dbReference>
<dbReference type="InterPro" id="IPR004413">
    <property type="entry name" value="GatB"/>
</dbReference>
<dbReference type="InterPro" id="IPR042114">
    <property type="entry name" value="GatB_C_1"/>
</dbReference>
<dbReference type="InterPro" id="IPR023168">
    <property type="entry name" value="GatB_Yqey_C_2"/>
</dbReference>
<dbReference type="InterPro" id="IPR017958">
    <property type="entry name" value="Gln-tRNA_amidoTrfase_suB_CS"/>
</dbReference>
<dbReference type="InterPro" id="IPR014746">
    <property type="entry name" value="Gln_synth/guanido_kin_cat_dom"/>
</dbReference>
<dbReference type="NCBIfam" id="TIGR00133">
    <property type="entry name" value="gatB"/>
    <property type="match status" value="1"/>
</dbReference>
<dbReference type="NCBIfam" id="NF004012">
    <property type="entry name" value="PRK05477.1-2"/>
    <property type="match status" value="1"/>
</dbReference>
<dbReference type="NCBIfam" id="NF004014">
    <property type="entry name" value="PRK05477.1-4"/>
    <property type="match status" value="1"/>
</dbReference>
<dbReference type="NCBIfam" id="NF004015">
    <property type="entry name" value="PRK05477.1-5"/>
    <property type="match status" value="1"/>
</dbReference>
<dbReference type="PANTHER" id="PTHR11659">
    <property type="entry name" value="GLUTAMYL-TRNA GLN AMIDOTRANSFERASE SUBUNIT B MITOCHONDRIAL AND PROKARYOTIC PET112-RELATED"/>
    <property type="match status" value="1"/>
</dbReference>
<dbReference type="PANTHER" id="PTHR11659:SF0">
    <property type="entry name" value="GLUTAMYL-TRNA(GLN) AMIDOTRANSFERASE SUBUNIT B, MITOCHONDRIAL"/>
    <property type="match status" value="1"/>
</dbReference>
<dbReference type="Pfam" id="PF02934">
    <property type="entry name" value="GatB_N"/>
    <property type="match status" value="1"/>
</dbReference>
<dbReference type="Pfam" id="PF02637">
    <property type="entry name" value="GatB_Yqey"/>
    <property type="match status" value="1"/>
</dbReference>
<dbReference type="SMART" id="SM00845">
    <property type="entry name" value="GatB_Yqey"/>
    <property type="match status" value="1"/>
</dbReference>
<dbReference type="SUPFAM" id="SSF89095">
    <property type="entry name" value="GatB/YqeY motif"/>
    <property type="match status" value="1"/>
</dbReference>
<dbReference type="SUPFAM" id="SSF55931">
    <property type="entry name" value="Glutamine synthetase/guanido kinase"/>
    <property type="match status" value="1"/>
</dbReference>
<dbReference type="PROSITE" id="PS01234">
    <property type="entry name" value="GATB"/>
    <property type="match status" value="1"/>
</dbReference>
<keyword id="KW-0067">ATP-binding</keyword>
<keyword id="KW-0436">Ligase</keyword>
<keyword id="KW-0547">Nucleotide-binding</keyword>
<keyword id="KW-0648">Protein biosynthesis</keyword>
<proteinExistence type="inferred from homology"/>